<proteinExistence type="evidence at protein level"/>
<comment type="function">
    <text evidence="1">May regulate transcription elongation by RNA polymerase II. May enhance transcriptional pausing at sites proximal to the promoter, which may in turn facilitate the assembly of an elongation competent RNA polymerase II complex (By similarity).</text>
</comment>
<comment type="interaction">
    <interactant intactId="EBI-25522213">
        <id>Q94C60</id>
    </interactant>
    <interactant intactId="EBI-15681313">
        <id>Q9LF53</id>
        <label>RGL3</label>
    </interactant>
    <organismsDiffer>false</organismsDiffer>
    <experiments>3</experiments>
</comment>
<comment type="subcellular location">
    <subcellularLocation>
        <location evidence="1">Nucleus</location>
    </subcellularLocation>
</comment>
<comment type="alternative products">
    <event type="alternative splicing"/>
    <isoform>
        <id>Q94C60-1</id>
        <name>1</name>
        <sequence type="displayed"/>
    </isoform>
    <text>A number of isoforms are produced. According to EST sequences.</text>
</comment>
<comment type="similarity">
    <text evidence="3">Belongs to the SPT4 family.</text>
</comment>
<comment type="sequence caution" evidence="3">
    <conflict type="erroneous gene model prediction">
        <sequence resource="EMBL-CDS" id="BAB10460"/>
    </conflict>
</comment>
<keyword id="KW-0010">Activator</keyword>
<keyword id="KW-0025">Alternative splicing</keyword>
<keyword id="KW-0479">Metal-binding</keyword>
<keyword id="KW-0539">Nucleus</keyword>
<keyword id="KW-1185">Reference proteome</keyword>
<keyword id="KW-0678">Repressor</keyword>
<keyword id="KW-0804">Transcription</keyword>
<keyword id="KW-0805">Transcription regulation</keyword>
<keyword id="KW-0862">Zinc</keyword>
<keyword id="KW-0863">Zinc-finger</keyword>
<feature type="chain" id="PRO_0000210336" description="Transcription elongation factor SPT4 homolog 2">
    <location>
        <begin position="1"/>
        <end position="116"/>
    </location>
</feature>
<feature type="zinc finger region" description="C4-type" evidence="2">
    <location>
        <begin position="19"/>
        <end position="39"/>
    </location>
</feature>
<evidence type="ECO:0000250" key="1"/>
<evidence type="ECO:0000255" key="2"/>
<evidence type="ECO:0000305" key="3"/>
<protein>
    <recommendedName>
        <fullName>Transcription elongation factor SPT4 homolog 2</fullName>
    </recommendedName>
</protein>
<accession>Q94C60</accession>
<accession>Q9FFP7</accession>
<reference key="1">
    <citation type="journal article" date="1997" name="DNA Res.">
        <title>Structural analysis of Arabidopsis thaliana chromosome 5. I. Sequence features of the 1.6 Mb regions covered by twenty physically assigned P1 clones.</title>
        <authorList>
            <person name="Sato S."/>
            <person name="Kotani H."/>
            <person name="Nakamura Y."/>
            <person name="Kaneko T."/>
            <person name="Asamizu E."/>
            <person name="Fukami M."/>
            <person name="Miyajima N."/>
            <person name="Tabata S."/>
        </authorList>
    </citation>
    <scope>NUCLEOTIDE SEQUENCE [LARGE SCALE GENOMIC DNA]</scope>
    <source>
        <strain>cv. Columbia</strain>
    </source>
</reference>
<reference key="2">
    <citation type="journal article" date="2017" name="Plant J.">
        <title>Araport11: a complete reannotation of the Arabidopsis thaliana reference genome.</title>
        <authorList>
            <person name="Cheng C.Y."/>
            <person name="Krishnakumar V."/>
            <person name="Chan A.P."/>
            <person name="Thibaud-Nissen F."/>
            <person name="Schobel S."/>
            <person name="Town C.D."/>
        </authorList>
    </citation>
    <scope>GENOME REANNOTATION</scope>
    <source>
        <strain>cv. Columbia</strain>
    </source>
</reference>
<reference key="3">
    <citation type="journal article" date="2003" name="Science">
        <title>Empirical analysis of transcriptional activity in the Arabidopsis genome.</title>
        <authorList>
            <person name="Yamada K."/>
            <person name="Lim J."/>
            <person name="Dale J.M."/>
            <person name="Chen H."/>
            <person name="Shinn P."/>
            <person name="Palm C.J."/>
            <person name="Southwick A.M."/>
            <person name="Wu H.C."/>
            <person name="Kim C.J."/>
            <person name="Nguyen M."/>
            <person name="Pham P.K."/>
            <person name="Cheuk R.F."/>
            <person name="Karlin-Newmann G."/>
            <person name="Liu S.X."/>
            <person name="Lam B."/>
            <person name="Sakano H."/>
            <person name="Wu T."/>
            <person name="Yu G."/>
            <person name="Miranda M."/>
            <person name="Quach H.L."/>
            <person name="Tripp M."/>
            <person name="Chang C.H."/>
            <person name="Lee J.M."/>
            <person name="Toriumi M.J."/>
            <person name="Chan M.M."/>
            <person name="Tang C.C."/>
            <person name="Onodera C.S."/>
            <person name="Deng J.M."/>
            <person name="Akiyama K."/>
            <person name="Ansari Y."/>
            <person name="Arakawa T."/>
            <person name="Banh J."/>
            <person name="Banno F."/>
            <person name="Bowser L."/>
            <person name="Brooks S.Y."/>
            <person name="Carninci P."/>
            <person name="Chao Q."/>
            <person name="Choy N."/>
            <person name="Enju A."/>
            <person name="Goldsmith A.D."/>
            <person name="Gurjal M."/>
            <person name="Hansen N.F."/>
            <person name="Hayashizaki Y."/>
            <person name="Johnson-Hopson C."/>
            <person name="Hsuan V.W."/>
            <person name="Iida K."/>
            <person name="Karnes M."/>
            <person name="Khan S."/>
            <person name="Koesema E."/>
            <person name="Ishida J."/>
            <person name="Jiang P.X."/>
            <person name="Jones T."/>
            <person name="Kawai J."/>
            <person name="Kamiya A."/>
            <person name="Meyers C."/>
            <person name="Nakajima M."/>
            <person name="Narusaka M."/>
            <person name="Seki M."/>
            <person name="Sakurai T."/>
            <person name="Satou M."/>
            <person name="Tamse R."/>
            <person name="Vaysberg M."/>
            <person name="Wallender E.K."/>
            <person name="Wong C."/>
            <person name="Yamamura Y."/>
            <person name="Yuan S."/>
            <person name="Shinozaki K."/>
            <person name="Davis R.W."/>
            <person name="Theologis A."/>
            <person name="Ecker J.R."/>
        </authorList>
    </citation>
    <scope>NUCLEOTIDE SEQUENCE [LARGE SCALE MRNA]</scope>
    <source>
        <strain>cv. Columbia</strain>
    </source>
</reference>
<reference key="4">
    <citation type="submission" date="2002-03" db="EMBL/GenBank/DDBJ databases">
        <title>Full-length cDNA from Arabidopsis thaliana.</title>
        <authorList>
            <person name="Brover V.V."/>
            <person name="Troukhan M.E."/>
            <person name="Alexandrov N.A."/>
            <person name="Lu Y.-P."/>
            <person name="Flavell R.B."/>
            <person name="Feldmann K.A."/>
        </authorList>
    </citation>
    <scope>NUCLEOTIDE SEQUENCE [LARGE SCALE MRNA]</scope>
</reference>
<sequence length="116" mass="13365">MGSAPAQIPTSFGHELRACLRCRLVKTYDQFRDAGCENCPFFKMEEDHERIVEVTTPNFNGIISVMDPSRSWAARWLRIGKFAPGCYTLAVSEPLPEEMQHLCQEERVQYVLPKRM</sequence>
<organism>
    <name type="scientific">Arabidopsis thaliana</name>
    <name type="common">Mouse-ear cress</name>
    <dbReference type="NCBI Taxonomy" id="3702"/>
    <lineage>
        <taxon>Eukaryota</taxon>
        <taxon>Viridiplantae</taxon>
        <taxon>Streptophyta</taxon>
        <taxon>Embryophyta</taxon>
        <taxon>Tracheophyta</taxon>
        <taxon>Spermatophyta</taxon>
        <taxon>Magnoliopsida</taxon>
        <taxon>eudicotyledons</taxon>
        <taxon>Gunneridae</taxon>
        <taxon>Pentapetalae</taxon>
        <taxon>rosids</taxon>
        <taxon>malvids</taxon>
        <taxon>Brassicales</taxon>
        <taxon>Brassicaceae</taxon>
        <taxon>Camelineae</taxon>
        <taxon>Arabidopsis</taxon>
    </lineage>
</organism>
<gene>
    <name type="ordered locus">At5g63670</name>
    <name type="ORF">MBK5.15</name>
</gene>
<dbReference type="EMBL" id="AB005234">
    <property type="protein sequence ID" value="BAB10460.1"/>
    <property type="status" value="ALT_SEQ"/>
    <property type="molecule type" value="Genomic_DNA"/>
</dbReference>
<dbReference type="EMBL" id="CP002688">
    <property type="protein sequence ID" value="AED97783.1"/>
    <property type="molecule type" value="Genomic_DNA"/>
</dbReference>
<dbReference type="EMBL" id="AY035161">
    <property type="protein sequence ID" value="AAK59665.1"/>
    <property type="molecule type" value="mRNA"/>
</dbReference>
<dbReference type="EMBL" id="AY063032">
    <property type="protein sequence ID" value="AAL34206.1"/>
    <property type="molecule type" value="mRNA"/>
</dbReference>
<dbReference type="EMBL" id="AY084523">
    <property type="protein sequence ID" value="AAM61091.1"/>
    <property type="molecule type" value="mRNA"/>
</dbReference>
<dbReference type="RefSeq" id="NP_568976.1">
    <molecule id="Q94C60-1"/>
    <property type="nucleotide sequence ID" value="NM_125762.4"/>
</dbReference>
<dbReference type="SMR" id="Q94C60"/>
<dbReference type="BioGRID" id="21729">
    <property type="interactions" value="4"/>
</dbReference>
<dbReference type="FunCoup" id="Q94C60">
    <property type="interactions" value="3157"/>
</dbReference>
<dbReference type="IntAct" id="Q94C60">
    <property type="interactions" value="1"/>
</dbReference>
<dbReference type="STRING" id="3702.Q94C60"/>
<dbReference type="PaxDb" id="3702-AT5G63670.1"/>
<dbReference type="ProteomicsDB" id="234099">
    <molecule id="Q94C60-1"/>
</dbReference>
<dbReference type="EnsemblPlants" id="AT5G63670.1">
    <molecule id="Q94C60-1"/>
    <property type="protein sequence ID" value="AT5G63670.1"/>
    <property type="gene ID" value="AT5G63670"/>
</dbReference>
<dbReference type="GeneID" id="836487"/>
<dbReference type="Gramene" id="AT5G63670.1">
    <molecule id="Q94C60-1"/>
    <property type="protein sequence ID" value="AT5G63670.1"/>
    <property type="gene ID" value="AT5G63670"/>
</dbReference>
<dbReference type="KEGG" id="ath:AT5G63670"/>
<dbReference type="Araport" id="AT5G63670"/>
<dbReference type="TAIR" id="AT5G63670">
    <property type="gene designation" value="SPT42"/>
</dbReference>
<dbReference type="eggNOG" id="KOG3490">
    <property type="taxonomic scope" value="Eukaryota"/>
</dbReference>
<dbReference type="HOGENOM" id="CLU_138052_0_0_1"/>
<dbReference type="InParanoid" id="Q94C60"/>
<dbReference type="OMA" id="FDGMIAV"/>
<dbReference type="OrthoDB" id="248751at2759"/>
<dbReference type="PhylomeDB" id="Q94C60"/>
<dbReference type="PRO" id="PR:Q94C60"/>
<dbReference type="Proteomes" id="UP000006548">
    <property type="component" value="Chromosome 5"/>
</dbReference>
<dbReference type="ExpressionAtlas" id="Q94C60">
    <property type="expression patterns" value="baseline and differential"/>
</dbReference>
<dbReference type="GO" id="GO:0005634">
    <property type="term" value="C:nucleus"/>
    <property type="evidence" value="ECO:0007669"/>
    <property type="project" value="UniProtKB-SubCell"/>
</dbReference>
<dbReference type="GO" id="GO:0008270">
    <property type="term" value="F:zinc ion binding"/>
    <property type="evidence" value="ECO:0007669"/>
    <property type="project" value="UniProtKB-KW"/>
</dbReference>
<dbReference type="GO" id="GO:0006355">
    <property type="term" value="P:regulation of DNA-templated transcription"/>
    <property type="evidence" value="ECO:0007669"/>
    <property type="project" value="InterPro"/>
</dbReference>
<dbReference type="GO" id="GO:0140673">
    <property type="term" value="P:transcription elongation-coupled chromatin remodeling"/>
    <property type="evidence" value="ECO:0007669"/>
    <property type="project" value="InterPro"/>
</dbReference>
<dbReference type="CDD" id="cd07973">
    <property type="entry name" value="Spt4"/>
    <property type="match status" value="1"/>
</dbReference>
<dbReference type="FunFam" id="3.30.40.210:FF:000002">
    <property type="entry name" value="Transcription elongation factor SPT4 homolog"/>
    <property type="match status" value="1"/>
</dbReference>
<dbReference type="Gene3D" id="3.30.40.210">
    <property type="match status" value="1"/>
</dbReference>
<dbReference type="InterPro" id="IPR029040">
    <property type="entry name" value="RPABC4/Spt4"/>
</dbReference>
<dbReference type="InterPro" id="IPR009287">
    <property type="entry name" value="Spt4"/>
</dbReference>
<dbReference type="InterPro" id="IPR022800">
    <property type="entry name" value="Spt4/RpoE2_Znf"/>
</dbReference>
<dbReference type="InterPro" id="IPR038510">
    <property type="entry name" value="Spt4_sf"/>
</dbReference>
<dbReference type="PANTHER" id="PTHR12882">
    <property type="entry name" value="SUPPRESSOR OF TY 4"/>
    <property type="match status" value="1"/>
</dbReference>
<dbReference type="PANTHER" id="PTHR12882:SF4">
    <property type="entry name" value="TRANSCRIPTION ELONGATION FACTOR SPT4 HOMOLOG 2"/>
    <property type="match status" value="1"/>
</dbReference>
<dbReference type="Pfam" id="PF06093">
    <property type="entry name" value="Spt4"/>
    <property type="match status" value="1"/>
</dbReference>
<dbReference type="PIRSF" id="PIRSF025023">
    <property type="entry name" value="Spt4"/>
    <property type="match status" value="1"/>
</dbReference>
<dbReference type="SMART" id="SM01389">
    <property type="entry name" value="Spt4"/>
    <property type="match status" value="1"/>
</dbReference>
<dbReference type="SUPFAM" id="SSF63393">
    <property type="entry name" value="RNA polymerase subunits"/>
    <property type="match status" value="1"/>
</dbReference>
<name>SPT42_ARATH</name>